<reference key="1">
    <citation type="journal article" date="2001" name="J. Bacteriol.">
        <title>Genome sequence and comparative analysis of the solvent-producing bacterium Clostridium acetobutylicum.</title>
        <authorList>
            <person name="Noelling J."/>
            <person name="Breton G."/>
            <person name="Omelchenko M.V."/>
            <person name="Makarova K.S."/>
            <person name="Zeng Q."/>
            <person name="Gibson R."/>
            <person name="Lee H.M."/>
            <person name="Dubois J."/>
            <person name="Qiu D."/>
            <person name="Hitti J."/>
            <person name="Wolf Y.I."/>
            <person name="Tatusov R.L."/>
            <person name="Sabathe F."/>
            <person name="Doucette-Stamm L.A."/>
            <person name="Soucaille P."/>
            <person name="Daly M.J."/>
            <person name="Bennett G.N."/>
            <person name="Koonin E.V."/>
            <person name="Smith D.R."/>
        </authorList>
    </citation>
    <scope>NUCLEOTIDE SEQUENCE [LARGE SCALE GENOMIC DNA]</scope>
    <source>
        <strain>ATCC 824 / DSM 792 / JCM 1419 / IAM 19013 / LMG 5710 / NBRC 13948 / NRRL B-527 / VKM B-1787 / 2291 / W</strain>
    </source>
</reference>
<dbReference type="EMBL" id="AE001437">
    <property type="protein sequence ID" value="AAK81045.1"/>
    <property type="molecule type" value="Genomic_DNA"/>
</dbReference>
<dbReference type="PIR" id="B97282">
    <property type="entry name" value="B97282"/>
</dbReference>
<dbReference type="RefSeq" id="NP_349705.1">
    <property type="nucleotide sequence ID" value="NC_003030.1"/>
</dbReference>
<dbReference type="SMR" id="Q97EK5"/>
<dbReference type="STRING" id="272562.CA_C3105"/>
<dbReference type="KEGG" id="cac:CA_C3105"/>
<dbReference type="PATRIC" id="fig|272562.8.peg.3288"/>
<dbReference type="eggNOG" id="COG0522">
    <property type="taxonomic scope" value="Bacteria"/>
</dbReference>
<dbReference type="HOGENOM" id="CLU_092403_0_2_9"/>
<dbReference type="OrthoDB" id="9803672at2"/>
<dbReference type="Proteomes" id="UP000000814">
    <property type="component" value="Chromosome"/>
</dbReference>
<dbReference type="GO" id="GO:0015935">
    <property type="term" value="C:small ribosomal subunit"/>
    <property type="evidence" value="ECO:0007669"/>
    <property type="project" value="InterPro"/>
</dbReference>
<dbReference type="GO" id="GO:0019843">
    <property type="term" value="F:rRNA binding"/>
    <property type="evidence" value="ECO:0007669"/>
    <property type="project" value="UniProtKB-UniRule"/>
</dbReference>
<dbReference type="GO" id="GO:0003735">
    <property type="term" value="F:structural constituent of ribosome"/>
    <property type="evidence" value="ECO:0007669"/>
    <property type="project" value="InterPro"/>
</dbReference>
<dbReference type="GO" id="GO:0042274">
    <property type="term" value="P:ribosomal small subunit biogenesis"/>
    <property type="evidence" value="ECO:0007669"/>
    <property type="project" value="TreeGrafter"/>
</dbReference>
<dbReference type="GO" id="GO:0006412">
    <property type="term" value="P:translation"/>
    <property type="evidence" value="ECO:0007669"/>
    <property type="project" value="UniProtKB-UniRule"/>
</dbReference>
<dbReference type="CDD" id="cd00165">
    <property type="entry name" value="S4"/>
    <property type="match status" value="1"/>
</dbReference>
<dbReference type="FunFam" id="1.10.1050.10:FF:000001">
    <property type="entry name" value="30S ribosomal protein S4"/>
    <property type="match status" value="1"/>
</dbReference>
<dbReference type="FunFam" id="3.10.290.10:FF:000001">
    <property type="entry name" value="30S ribosomal protein S4"/>
    <property type="match status" value="1"/>
</dbReference>
<dbReference type="Gene3D" id="1.10.1050.10">
    <property type="entry name" value="Ribosomal Protein S4 Delta 41, Chain A, domain 1"/>
    <property type="match status" value="1"/>
</dbReference>
<dbReference type="Gene3D" id="3.10.290.10">
    <property type="entry name" value="RNA-binding S4 domain"/>
    <property type="match status" value="1"/>
</dbReference>
<dbReference type="HAMAP" id="MF_01306_B">
    <property type="entry name" value="Ribosomal_uS4_B"/>
    <property type="match status" value="1"/>
</dbReference>
<dbReference type="InterPro" id="IPR022801">
    <property type="entry name" value="Ribosomal_uS4"/>
</dbReference>
<dbReference type="InterPro" id="IPR005709">
    <property type="entry name" value="Ribosomal_uS4_bac-type"/>
</dbReference>
<dbReference type="InterPro" id="IPR001912">
    <property type="entry name" value="Ribosomal_uS4_N"/>
</dbReference>
<dbReference type="InterPro" id="IPR002942">
    <property type="entry name" value="S4_RNA-bd"/>
</dbReference>
<dbReference type="InterPro" id="IPR036986">
    <property type="entry name" value="S4_RNA-bd_sf"/>
</dbReference>
<dbReference type="NCBIfam" id="NF003717">
    <property type="entry name" value="PRK05327.1"/>
    <property type="match status" value="1"/>
</dbReference>
<dbReference type="NCBIfam" id="TIGR01017">
    <property type="entry name" value="rpsD_bact"/>
    <property type="match status" value="1"/>
</dbReference>
<dbReference type="PANTHER" id="PTHR11831">
    <property type="entry name" value="30S 40S RIBOSOMAL PROTEIN"/>
    <property type="match status" value="1"/>
</dbReference>
<dbReference type="PANTHER" id="PTHR11831:SF4">
    <property type="entry name" value="SMALL RIBOSOMAL SUBUNIT PROTEIN US4M"/>
    <property type="match status" value="1"/>
</dbReference>
<dbReference type="Pfam" id="PF00163">
    <property type="entry name" value="Ribosomal_S4"/>
    <property type="match status" value="1"/>
</dbReference>
<dbReference type="Pfam" id="PF01479">
    <property type="entry name" value="S4"/>
    <property type="match status" value="1"/>
</dbReference>
<dbReference type="SMART" id="SM01390">
    <property type="entry name" value="Ribosomal_S4"/>
    <property type="match status" value="1"/>
</dbReference>
<dbReference type="SMART" id="SM00363">
    <property type="entry name" value="S4"/>
    <property type="match status" value="1"/>
</dbReference>
<dbReference type="SUPFAM" id="SSF55174">
    <property type="entry name" value="Alpha-L RNA-binding motif"/>
    <property type="match status" value="1"/>
</dbReference>
<dbReference type="PROSITE" id="PS50889">
    <property type="entry name" value="S4"/>
    <property type="match status" value="1"/>
</dbReference>
<name>RS4A_CLOAB</name>
<protein>
    <recommendedName>
        <fullName evidence="2">Small ribosomal subunit protein uS4A</fullName>
    </recommendedName>
    <alternativeName>
        <fullName evidence="3">30S ribosomal protein S4 1</fullName>
    </alternativeName>
</protein>
<evidence type="ECO:0000250" key="1"/>
<evidence type="ECO:0000255" key="2">
    <source>
        <dbReference type="HAMAP-Rule" id="MF_01306"/>
    </source>
</evidence>
<evidence type="ECO:0000305" key="3"/>
<sequence>MARYTGAVCRLCRREGLKLFLKGDRCYTDKCAFTRRGYAPGVHGQSRKKISNYGLQLREKQKAKRIYGVLEKQFRIYYKRAERIKGISGENLLKLLELRLDNVAYKLGYGSSRKEARQLVTHGHFLVNGKKVDIPSYTLKVNEVVSVSEKSRGTEKFKTFAENPKTLPAWIEANYDNFEAKIVAEPNREDIDTPIKETLIVELYSK</sequence>
<organism>
    <name type="scientific">Clostridium acetobutylicum (strain ATCC 824 / DSM 792 / JCM 1419 / IAM 19013 / LMG 5710 / NBRC 13948 / NRRL B-527 / VKM B-1787 / 2291 / W)</name>
    <dbReference type="NCBI Taxonomy" id="272562"/>
    <lineage>
        <taxon>Bacteria</taxon>
        <taxon>Bacillati</taxon>
        <taxon>Bacillota</taxon>
        <taxon>Clostridia</taxon>
        <taxon>Eubacteriales</taxon>
        <taxon>Clostridiaceae</taxon>
        <taxon>Clostridium</taxon>
    </lineage>
</organism>
<comment type="function">
    <text evidence="1">One of the primary rRNA binding proteins, it binds directly to 16S rRNA where it nucleates assembly of the body of the 30S subunit.</text>
</comment>
<comment type="function">
    <text evidence="1">With S5 and S12 plays an important role in translational accuracy.</text>
</comment>
<comment type="subunit">
    <text evidence="1">Part of the 30S ribosomal subunit. Contacts protein S5. The interaction surface between S4 and S5 is involved in control of translational fidelity (By similarity).</text>
</comment>
<comment type="similarity">
    <text evidence="3">Belongs to the universal ribosomal protein uS4 family.</text>
</comment>
<feature type="chain" id="PRO_0000132367" description="Small ribosomal subunit protein uS4A">
    <location>
        <begin position="1"/>
        <end position="206"/>
    </location>
</feature>
<feature type="domain" description="S4 RNA-binding">
    <location>
        <begin position="98"/>
        <end position="164"/>
    </location>
</feature>
<proteinExistence type="inferred from homology"/>
<gene>
    <name type="primary">rspD1</name>
    <name type="ordered locus">CA_C3105</name>
</gene>
<accession>Q97EK5</accession>
<keyword id="KW-1185">Reference proteome</keyword>
<keyword id="KW-0687">Ribonucleoprotein</keyword>
<keyword id="KW-0689">Ribosomal protein</keyword>
<keyword id="KW-0694">RNA-binding</keyword>
<keyword id="KW-0699">rRNA-binding</keyword>